<organism>
    <name type="scientific">Petrotoga mobilis (strain DSM 10674 / SJ95)</name>
    <dbReference type="NCBI Taxonomy" id="403833"/>
    <lineage>
        <taxon>Bacteria</taxon>
        <taxon>Thermotogati</taxon>
        <taxon>Thermotogota</taxon>
        <taxon>Thermotogae</taxon>
        <taxon>Petrotogales</taxon>
        <taxon>Petrotogaceae</taxon>
        <taxon>Petrotoga</taxon>
    </lineage>
</organism>
<protein>
    <recommendedName>
        <fullName evidence="1">Large ribosomal subunit protein uL29</fullName>
    </recommendedName>
    <alternativeName>
        <fullName evidence="2">50S ribosomal protein L29</fullName>
    </alternativeName>
</protein>
<dbReference type="EMBL" id="CP000879">
    <property type="protein sequence ID" value="ABX31506.1"/>
    <property type="molecule type" value="Genomic_DNA"/>
</dbReference>
<dbReference type="RefSeq" id="WP_012208609.1">
    <property type="nucleotide sequence ID" value="NC_010003.1"/>
</dbReference>
<dbReference type="SMR" id="A9BH97"/>
<dbReference type="STRING" id="403833.Pmob_0782"/>
<dbReference type="KEGG" id="pmo:Pmob_0782"/>
<dbReference type="eggNOG" id="COG0255">
    <property type="taxonomic scope" value="Bacteria"/>
</dbReference>
<dbReference type="HOGENOM" id="CLU_158491_5_2_0"/>
<dbReference type="OrthoDB" id="9815192at2"/>
<dbReference type="Proteomes" id="UP000000789">
    <property type="component" value="Chromosome"/>
</dbReference>
<dbReference type="GO" id="GO:0022625">
    <property type="term" value="C:cytosolic large ribosomal subunit"/>
    <property type="evidence" value="ECO:0007669"/>
    <property type="project" value="TreeGrafter"/>
</dbReference>
<dbReference type="GO" id="GO:0003735">
    <property type="term" value="F:structural constituent of ribosome"/>
    <property type="evidence" value="ECO:0007669"/>
    <property type="project" value="InterPro"/>
</dbReference>
<dbReference type="GO" id="GO:0006412">
    <property type="term" value="P:translation"/>
    <property type="evidence" value="ECO:0007669"/>
    <property type="project" value="UniProtKB-UniRule"/>
</dbReference>
<dbReference type="CDD" id="cd00427">
    <property type="entry name" value="Ribosomal_L29_HIP"/>
    <property type="match status" value="1"/>
</dbReference>
<dbReference type="FunFam" id="1.10.287.310:FF:000001">
    <property type="entry name" value="50S ribosomal protein L29"/>
    <property type="match status" value="1"/>
</dbReference>
<dbReference type="Gene3D" id="1.10.287.310">
    <property type="match status" value="1"/>
</dbReference>
<dbReference type="HAMAP" id="MF_00374">
    <property type="entry name" value="Ribosomal_uL29"/>
    <property type="match status" value="1"/>
</dbReference>
<dbReference type="InterPro" id="IPR050063">
    <property type="entry name" value="Ribosomal_protein_uL29"/>
</dbReference>
<dbReference type="InterPro" id="IPR001854">
    <property type="entry name" value="Ribosomal_uL29"/>
</dbReference>
<dbReference type="InterPro" id="IPR018254">
    <property type="entry name" value="Ribosomal_uL29_CS"/>
</dbReference>
<dbReference type="InterPro" id="IPR036049">
    <property type="entry name" value="Ribosomal_uL29_sf"/>
</dbReference>
<dbReference type="NCBIfam" id="TIGR00012">
    <property type="entry name" value="L29"/>
    <property type="match status" value="1"/>
</dbReference>
<dbReference type="PANTHER" id="PTHR10916">
    <property type="entry name" value="60S RIBOSOMAL PROTEIN L35/50S RIBOSOMAL PROTEIN L29"/>
    <property type="match status" value="1"/>
</dbReference>
<dbReference type="PANTHER" id="PTHR10916:SF0">
    <property type="entry name" value="LARGE RIBOSOMAL SUBUNIT PROTEIN UL29C"/>
    <property type="match status" value="1"/>
</dbReference>
<dbReference type="Pfam" id="PF00831">
    <property type="entry name" value="Ribosomal_L29"/>
    <property type="match status" value="1"/>
</dbReference>
<dbReference type="SUPFAM" id="SSF46561">
    <property type="entry name" value="Ribosomal protein L29 (L29p)"/>
    <property type="match status" value="1"/>
</dbReference>
<dbReference type="PROSITE" id="PS00579">
    <property type="entry name" value="RIBOSOMAL_L29"/>
    <property type="match status" value="1"/>
</dbReference>
<reference key="1">
    <citation type="submission" date="2007-11" db="EMBL/GenBank/DDBJ databases">
        <title>Complete sequence of Petroga mobilis SJ95.</title>
        <authorList>
            <consortium name="US DOE Joint Genome Institute"/>
            <person name="Copeland A."/>
            <person name="Lucas S."/>
            <person name="Lapidus A."/>
            <person name="Barry K."/>
            <person name="Glavina del Rio T."/>
            <person name="Dalin E."/>
            <person name="Tice H."/>
            <person name="Pitluck S."/>
            <person name="Meincke L."/>
            <person name="Brettin T."/>
            <person name="Bruce D."/>
            <person name="Detter J.C."/>
            <person name="Han C."/>
            <person name="Kuske C.R."/>
            <person name="Schmutz J."/>
            <person name="Larimer F."/>
            <person name="Land M."/>
            <person name="Hauser L."/>
            <person name="Kyrpides N."/>
            <person name="Mikhailova N."/>
            <person name="Noll K."/>
            <person name="Richardson P."/>
        </authorList>
    </citation>
    <scope>NUCLEOTIDE SEQUENCE [LARGE SCALE GENOMIC DNA]</scope>
    <source>
        <strain>DSM 10674 / SJ95</strain>
    </source>
</reference>
<feature type="chain" id="PRO_1000079896" description="Large ribosomal subunit protein uL29">
    <location>
        <begin position="1"/>
        <end position="66"/>
    </location>
</feature>
<name>RL29_PETMO</name>
<accession>A9BH97</accession>
<sequence>MRITEMRELTDEELNQELNNLKEKLFQLRFQLELGQLKNSSSIKQVKKDIARIKTILKERELGIRR</sequence>
<gene>
    <name evidence="1" type="primary">rpmC</name>
    <name type="ordered locus">Pmob_0782</name>
</gene>
<proteinExistence type="inferred from homology"/>
<evidence type="ECO:0000255" key="1">
    <source>
        <dbReference type="HAMAP-Rule" id="MF_00374"/>
    </source>
</evidence>
<evidence type="ECO:0000305" key="2"/>
<comment type="similarity">
    <text evidence="1">Belongs to the universal ribosomal protein uL29 family.</text>
</comment>
<keyword id="KW-0687">Ribonucleoprotein</keyword>
<keyword id="KW-0689">Ribosomal protein</keyword>